<gene>
    <name evidence="1" type="primary">L3</name>
</gene>
<protein>
    <recommendedName>
        <fullName evidence="1">Hexon protein</fullName>
        <shortName evidence="1">CP-H</shortName>
    </recommendedName>
    <alternativeName>
        <fullName evidence="1">Protein II</fullName>
    </alternativeName>
</protein>
<organismHost>
    <name type="scientific">Bos taurus</name>
    <name type="common">Bovine</name>
    <dbReference type="NCBI Taxonomy" id="9913"/>
</organismHost>
<keyword id="KW-0002">3D-structure</keyword>
<keyword id="KW-0007">Acetylation</keyword>
<keyword id="KW-0167">Capsid protein</keyword>
<keyword id="KW-1176">Cytoplasmic inwards viral transport</keyword>
<keyword id="KW-1048">Host nucleus</keyword>
<keyword id="KW-0945">Host-virus interaction</keyword>
<keyword id="KW-0426">Late protein</keyword>
<keyword id="KW-1177">Microtubular inwards viral transport</keyword>
<keyword id="KW-0597">Phosphoprotein</keyword>
<keyword id="KW-1148">T=25 icosahedral capsid protein</keyword>
<keyword id="KW-0946">Virion</keyword>
<keyword id="KW-1160">Virus entry into host cell</keyword>
<accession>P03278</accession>
<comment type="function">
    <text evidence="1">Major capsid protein that self-associates to form 240 hexon trimers, each in the shape of a hexagon, building most of the pseudo T=25 capsid. Assembled into trimeric units with the help of the chaperone shutoff protein. Transported by pre-protein VI to the nucleus where it associates with other structural proteins to form an empty capsid. Might be involved, through its interaction with host dyneins, in the intracellular microtubule-dependent transport of incoming viral capsid to the nucleus.</text>
</comment>
<comment type="subunit">
    <text evidence="1">Homotrimer. Interacts with the capsid vertex protein; this interaction binds the peripentonal hexons to the neighboring penton base. Interacts with the hexon-linking protein; this interaction tethers the hexons surrounding the penton to those situated in the central plate of the facet. Interacts with the hexon-interlacing protein; this interaction lashes the hexons together. Interacts with host dyneins DYNC1LI1 and DYNC1I2; this interaction might be involved in intracellular microtubule-dependent transport of incoming viral capsid. Interacts with the shutoff protein; this interaction allows folding and formation of hexons trimers. Interacts with pre-protein VI; this interaction probably allows nuclear import of hexon trimers and possibly pre-capsid assembly.</text>
</comment>
<comment type="subcellular location">
    <subcellularLocation>
        <location evidence="1">Virion</location>
    </subcellularLocation>
    <subcellularLocation>
        <location evidence="1">Host nucleus</location>
    </subcellularLocation>
    <text evidence="1">Forms the capsid icosahedric shell. Present in 720 copies per virion, assembled in 240 trimers.</text>
</comment>
<comment type="induction">
    <text evidence="1">Expressed in the late phase of the viral replicative cycle.</text>
</comment>
<comment type="miscellaneous">
    <text evidence="1">All late proteins expressed from the major late promoter are produced by alternative splicing and alternative polyadenylation of the same gene giving rise to non-overlapping ORFs. A leader sequence is present in the N-terminus of all these mRNAs and is recognized by the viral shutoff protein to provide expression although conventional translation via ribosome scanning from the cap has been shut off in the host cell.</text>
</comment>
<comment type="similarity">
    <text evidence="1 2">Belongs to the adenoviridae hexon protein family.</text>
</comment>
<proteinExistence type="evidence at protein level"/>
<evidence type="ECO:0000255" key="1">
    <source>
        <dbReference type="HAMAP-Rule" id="MF_04051"/>
    </source>
</evidence>
<evidence type="ECO:0000305" key="2"/>
<dbReference type="EMBL" id="K01264">
    <property type="protein sequence ID" value="AAA42509.1"/>
    <property type="molecule type" value="Genomic_DNA"/>
</dbReference>
<dbReference type="EMBL" id="X53990">
    <property type="protein sequence ID" value="CAA37936.1"/>
    <property type="molecule type" value="Genomic_DNA"/>
</dbReference>
<dbReference type="PIR" id="A03850">
    <property type="entry name" value="HXADB3"/>
</dbReference>
<dbReference type="PDB" id="3ZIF">
    <property type="method" value="EM"/>
    <property type="resolution" value="4.50 A"/>
    <property type="chains" value="A/B/C/D/E/F/G/H/I/J/K/L=1-911"/>
</dbReference>
<dbReference type="PDBsum" id="3ZIF"/>
<dbReference type="SMR" id="P03278"/>
<dbReference type="GO" id="GO:0043657">
    <property type="term" value="C:host cell"/>
    <property type="evidence" value="ECO:0007669"/>
    <property type="project" value="GOC"/>
</dbReference>
<dbReference type="GO" id="GO:0042025">
    <property type="term" value="C:host cell nucleus"/>
    <property type="evidence" value="ECO:0007669"/>
    <property type="project" value="UniProtKB-SubCell"/>
</dbReference>
<dbReference type="GO" id="GO:0039623">
    <property type="term" value="C:T=25 icosahedral viral capsid"/>
    <property type="evidence" value="ECO:0007669"/>
    <property type="project" value="UniProtKB-UniRule"/>
</dbReference>
<dbReference type="GO" id="GO:0005198">
    <property type="term" value="F:structural molecule activity"/>
    <property type="evidence" value="ECO:0007669"/>
    <property type="project" value="UniProtKB-UniRule"/>
</dbReference>
<dbReference type="GO" id="GO:0075521">
    <property type="term" value="P:microtubule-dependent intracellular transport of viral material towards nucleus"/>
    <property type="evidence" value="ECO:0007669"/>
    <property type="project" value="UniProtKB-UniRule"/>
</dbReference>
<dbReference type="GO" id="GO:0046718">
    <property type="term" value="P:symbiont entry into host cell"/>
    <property type="evidence" value="ECO:0007669"/>
    <property type="project" value="UniProtKB-UniRule"/>
</dbReference>
<dbReference type="Gene3D" id="2.70.9.10">
    <property type="entry name" value="Adenovirus Type 2 Hexon, domain 4"/>
    <property type="match status" value="2"/>
</dbReference>
<dbReference type="Gene3D" id="3.90.39.10">
    <property type="entry name" value="Hexon Major Viral Coat Protein, domain 2"/>
    <property type="match status" value="1"/>
</dbReference>
<dbReference type="Gene3D" id="3.90.249.10">
    <property type="entry name" value="Hexon Major Viral Coat Protein, domain 3"/>
    <property type="match status" value="2"/>
</dbReference>
<dbReference type="HAMAP" id="MF_04051">
    <property type="entry name" value="ADV_CAPSH"/>
    <property type="match status" value="1"/>
</dbReference>
<dbReference type="InterPro" id="IPR016108">
    <property type="entry name" value="Adenovirus_Pll_hexon_C"/>
</dbReference>
<dbReference type="InterPro" id="IPR016107">
    <property type="entry name" value="Adenovirus_Pll_hexon_N"/>
</dbReference>
<dbReference type="InterPro" id="IPR044942">
    <property type="entry name" value="Adenovirus_Pll_hexon_sub2"/>
</dbReference>
<dbReference type="InterPro" id="IPR016110">
    <property type="entry name" value="Adenovirus_Pll_hexon_sub3"/>
</dbReference>
<dbReference type="InterPro" id="IPR037542">
    <property type="entry name" value="ADV_hexon"/>
</dbReference>
<dbReference type="InterPro" id="IPR016112">
    <property type="entry name" value="VP_dsDNA_II"/>
</dbReference>
<dbReference type="Pfam" id="PF01065">
    <property type="entry name" value="Adeno_hexon"/>
    <property type="match status" value="1"/>
</dbReference>
<dbReference type="Pfam" id="PF03678">
    <property type="entry name" value="Adeno_hexon_C"/>
    <property type="match status" value="1"/>
</dbReference>
<dbReference type="SUPFAM" id="SSF49749">
    <property type="entry name" value="Group II dsDNA viruses VP"/>
    <property type="match status" value="2"/>
</dbReference>
<organism>
    <name type="scientific">Bovine adenovirus B serotype 3</name>
    <name type="common">BAdV-3</name>
    <name type="synonym">Mastadenovirus bos3</name>
    <dbReference type="NCBI Taxonomy" id="10510"/>
    <lineage>
        <taxon>Viruses</taxon>
        <taxon>Varidnaviria</taxon>
        <taxon>Bamfordvirae</taxon>
        <taxon>Preplasmiviricota</taxon>
        <taxon>Tectiliviricetes</taxon>
        <taxon>Rowavirales</taxon>
        <taxon>Adenoviridae</taxon>
        <taxon>Mastadenovirus</taxon>
        <taxon>Bovine mastadenovirus B</taxon>
    </lineage>
</organism>
<name>CAPSH_ADEB3</name>
<sequence>MATPSMLPQWSYMHIAGQDASEYLSPGLVQFAQATESYFNIGNKFRNPTVAPTHDVTTERSQRLQLRFVPVDREDTQYSYKTRFQLAVGDNRVLDMASTYFDIRGTLDRGASFKPYSGTAYNSFAPKSAPNNTQFRQANNGHPAQTIAQASYVATIGGANNDLQMGVDERQLPVYANTTYQPEPQLGIEGWTAGSMAVIDQAGGRVLRNPTQTPCYGSYAKPTNEHGGITKANTQVEKKYYRTGDNGNPETVFYTEEADVLTPDTHLVHAVPAADRAKVEGLSQHAAPNRPNFIGFRDCFVGLMYYNSGGNLGVLAGQSSQLNAVVDLQDRNTELSYQMLLANTTDRSRYFSMWNQAMDSYDPEVRVIDNVGVEDEMPNYCFPLSGVQIGNRSHEVQRNQQQWQNVANSDNNYIGKGNLPAMEINLAANLWRSFLYSNVALYLPDNLKFTPHNIQLPPNTNTYEYMNGRIPVSGLIDTYVNIGTRWSPDVMDNVNPFNHHRNSGLRYRSQLLGNGRFCDFHIQVPQKFFAIRNLLLLPGTYTYEWSFRKDVNMILQSTLGNDLRVDGATVNITSVNLYASFFPMSHNTASTLEAMLRNDTNDQSFNDYLSAANMLYPIPPNATQLPIPSRNWAAFRGWSLTRLKQRETPALGSPFDPYFTYSGTIPYLDGTFYLSHTFRKVAIQFDSSVTWPGNDRLLTPNEFEIKISVDGEGYNVAQSNMTKDWFLVQMLANYNIGYQGYHLPPDYKDRTFSFLHNFIPMCRQVPNPATEGYFGLGIVNHRTTPAYWFRFCRAPREGHPYPQLALPPHWDPRHALRDPERKFLCDRTLWRIPFSSNFMSMGSLTDLGQNLLYANAAHALDMTFEMDPINEPTLLYVLFEVFDVARVHQPHRGVIEVVYLRTPFSAGNATT</sequence>
<feature type="initiator methionine" description="Removed; by host" evidence="1">
    <location>
        <position position="1"/>
    </location>
</feature>
<feature type="chain" id="PRO_0000221827" description="Hexon protein" evidence="1">
    <location>
        <begin position="2"/>
        <end position="911"/>
    </location>
</feature>
<feature type="site" description="Involved in interaction with pre-protein VI" evidence="1">
    <location>
        <position position="737"/>
    </location>
</feature>
<feature type="modified residue" description="N-acetylalanine; by host" evidence="1">
    <location>
        <position position="2"/>
    </location>
</feature>
<feature type="modified residue" description="Phosphotyrosine; by host" evidence="1">
    <location>
        <position position="899"/>
    </location>
</feature>
<reference key="1">
    <citation type="journal article" date="1984" name="J. Virol.">
        <title>Sequence homology between bovine and human adenoviruses.</title>
        <authorList>
            <person name="Hu S.-L."/>
            <person name="Hays W.W."/>
            <person name="Potts D.E."/>
        </authorList>
    </citation>
    <scope>NUCLEOTIDE SEQUENCE [GENOMIC DNA]</scope>
</reference>
<reference key="2">
    <citation type="journal article" date="1990" name="Nucleic Acids Res.">
        <title>Nucleotide and deduced amino acid sequence of the bovine adenovirus type 3 proteinase.</title>
        <authorList>
            <person name="Cai F."/>
            <person name="Bourbonniere M."/>
            <person name="Tang D."/>
            <person name="Hu S.L."/>
            <person name="Weber J.M."/>
        </authorList>
    </citation>
    <scope>NUCLEOTIDE SEQUENCE [GENOMIC DNA] OF 877-911</scope>
</reference>